<comment type="function">
    <text evidence="1">Involved in the biosynthesis of the chorismate, which leads to the biosynthesis of aromatic amino acids. Catalyzes the reversible NADPH linked reduction of 3-dehydroshikimate (DHSA) to yield shikimate (SA).</text>
</comment>
<comment type="catalytic activity">
    <reaction evidence="1">
        <text>shikimate + NADP(+) = 3-dehydroshikimate + NADPH + H(+)</text>
        <dbReference type="Rhea" id="RHEA:17737"/>
        <dbReference type="ChEBI" id="CHEBI:15378"/>
        <dbReference type="ChEBI" id="CHEBI:16630"/>
        <dbReference type="ChEBI" id="CHEBI:36208"/>
        <dbReference type="ChEBI" id="CHEBI:57783"/>
        <dbReference type="ChEBI" id="CHEBI:58349"/>
        <dbReference type="EC" id="1.1.1.25"/>
    </reaction>
</comment>
<comment type="pathway">
    <text evidence="1">Metabolic intermediate biosynthesis; chorismate biosynthesis; chorismate from D-erythrose 4-phosphate and phosphoenolpyruvate: step 4/7.</text>
</comment>
<comment type="subunit">
    <text evidence="1">Homodimer.</text>
</comment>
<comment type="similarity">
    <text evidence="1">Belongs to the shikimate dehydrogenase family.</text>
</comment>
<reference key="1">
    <citation type="submission" date="2006-03" db="EMBL/GenBank/DDBJ databases">
        <title>Complete sequence of Rhodopseudomonas palustris BisB18.</title>
        <authorList>
            <consortium name="US DOE Joint Genome Institute"/>
            <person name="Copeland A."/>
            <person name="Lucas S."/>
            <person name="Lapidus A."/>
            <person name="Barry K."/>
            <person name="Detter J.C."/>
            <person name="Glavina del Rio T."/>
            <person name="Hammon N."/>
            <person name="Israni S."/>
            <person name="Dalin E."/>
            <person name="Tice H."/>
            <person name="Pitluck S."/>
            <person name="Chain P."/>
            <person name="Malfatti S."/>
            <person name="Shin M."/>
            <person name="Vergez L."/>
            <person name="Schmutz J."/>
            <person name="Larimer F."/>
            <person name="Land M."/>
            <person name="Hauser L."/>
            <person name="Pelletier D.A."/>
            <person name="Kyrpides N."/>
            <person name="Anderson I."/>
            <person name="Oda Y."/>
            <person name="Harwood C.S."/>
            <person name="Richardson P."/>
        </authorList>
    </citation>
    <scope>NUCLEOTIDE SEQUENCE [LARGE SCALE GENOMIC DNA]</scope>
    <source>
        <strain>BisB18</strain>
    </source>
</reference>
<proteinExistence type="inferred from homology"/>
<evidence type="ECO:0000255" key="1">
    <source>
        <dbReference type="HAMAP-Rule" id="MF_00222"/>
    </source>
</evidence>
<organism>
    <name type="scientific">Rhodopseudomonas palustris (strain BisB18)</name>
    <dbReference type="NCBI Taxonomy" id="316056"/>
    <lineage>
        <taxon>Bacteria</taxon>
        <taxon>Pseudomonadati</taxon>
        <taxon>Pseudomonadota</taxon>
        <taxon>Alphaproteobacteria</taxon>
        <taxon>Hyphomicrobiales</taxon>
        <taxon>Nitrobacteraceae</taxon>
        <taxon>Rhodopseudomonas</taxon>
    </lineage>
</organism>
<sequence>MTRIKAACLIGWPAAHSRSPMIHHYWLRTLGIEGGYAIESVPPEGFGEFVLHLSTHGYLGANVTIPHKERALLLTEPDARARAVGAANTLWYDGETLRSTNTDIEGFLNNLDACAPGWDGIDEALVLGAGGSSRAVVFGLIERGIKRIHLANRTLDRAQAVADQFNADVVPTAWQDLAAVLPRAKLLVNTTSLGMKGQPALEVDIGLLPTDAAVADLVYVPLETPLLAAARARGLATADGLGMLLHQAVRGFELWFGTRPSVTPELRALIEADLAPA</sequence>
<gene>
    <name evidence="1" type="primary">aroE</name>
    <name type="ordered locus">RPC_4117</name>
</gene>
<protein>
    <recommendedName>
        <fullName evidence="1">Shikimate dehydrogenase (NADP(+))</fullName>
        <shortName evidence="1">SDH</shortName>
        <ecNumber evidence="1">1.1.1.25</ecNumber>
    </recommendedName>
</protein>
<dbReference type="EC" id="1.1.1.25" evidence="1"/>
<dbReference type="EMBL" id="CP000301">
    <property type="protein sequence ID" value="ABD89643.1"/>
    <property type="molecule type" value="Genomic_DNA"/>
</dbReference>
<dbReference type="SMR" id="Q20YZ3"/>
<dbReference type="STRING" id="316056.RPC_4117"/>
<dbReference type="KEGG" id="rpc:RPC_4117"/>
<dbReference type="eggNOG" id="COG0169">
    <property type="taxonomic scope" value="Bacteria"/>
</dbReference>
<dbReference type="HOGENOM" id="CLU_044063_2_0_5"/>
<dbReference type="OrthoDB" id="9792692at2"/>
<dbReference type="UniPathway" id="UPA00053">
    <property type="reaction ID" value="UER00087"/>
</dbReference>
<dbReference type="GO" id="GO:0005829">
    <property type="term" value="C:cytosol"/>
    <property type="evidence" value="ECO:0007669"/>
    <property type="project" value="TreeGrafter"/>
</dbReference>
<dbReference type="GO" id="GO:0050661">
    <property type="term" value="F:NADP binding"/>
    <property type="evidence" value="ECO:0007669"/>
    <property type="project" value="InterPro"/>
</dbReference>
<dbReference type="GO" id="GO:0004764">
    <property type="term" value="F:shikimate 3-dehydrogenase (NADP+) activity"/>
    <property type="evidence" value="ECO:0007669"/>
    <property type="project" value="UniProtKB-UniRule"/>
</dbReference>
<dbReference type="GO" id="GO:0008652">
    <property type="term" value="P:amino acid biosynthetic process"/>
    <property type="evidence" value="ECO:0007669"/>
    <property type="project" value="UniProtKB-KW"/>
</dbReference>
<dbReference type="GO" id="GO:0009073">
    <property type="term" value="P:aromatic amino acid family biosynthetic process"/>
    <property type="evidence" value="ECO:0007669"/>
    <property type="project" value="UniProtKB-KW"/>
</dbReference>
<dbReference type="GO" id="GO:0009423">
    <property type="term" value="P:chorismate biosynthetic process"/>
    <property type="evidence" value="ECO:0007669"/>
    <property type="project" value="UniProtKB-UniRule"/>
</dbReference>
<dbReference type="GO" id="GO:0019632">
    <property type="term" value="P:shikimate metabolic process"/>
    <property type="evidence" value="ECO:0007669"/>
    <property type="project" value="InterPro"/>
</dbReference>
<dbReference type="CDD" id="cd01065">
    <property type="entry name" value="NAD_bind_Shikimate_DH"/>
    <property type="match status" value="1"/>
</dbReference>
<dbReference type="Gene3D" id="3.40.50.10860">
    <property type="entry name" value="Leucine Dehydrogenase, chain A, domain 1"/>
    <property type="match status" value="1"/>
</dbReference>
<dbReference type="Gene3D" id="3.40.50.720">
    <property type="entry name" value="NAD(P)-binding Rossmann-like Domain"/>
    <property type="match status" value="1"/>
</dbReference>
<dbReference type="HAMAP" id="MF_00222">
    <property type="entry name" value="Shikimate_DH_AroE"/>
    <property type="match status" value="1"/>
</dbReference>
<dbReference type="InterPro" id="IPR046346">
    <property type="entry name" value="Aminoacid_DH-like_N_sf"/>
</dbReference>
<dbReference type="InterPro" id="IPR036291">
    <property type="entry name" value="NAD(P)-bd_dom_sf"/>
</dbReference>
<dbReference type="InterPro" id="IPR041121">
    <property type="entry name" value="SDH_C"/>
</dbReference>
<dbReference type="InterPro" id="IPR011342">
    <property type="entry name" value="Shikimate_DH"/>
</dbReference>
<dbReference type="InterPro" id="IPR013708">
    <property type="entry name" value="Shikimate_DH-bd_N"/>
</dbReference>
<dbReference type="InterPro" id="IPR022893">
    <property type="entry name" value="Shikimate_DH_fam"/>
</dbReference>
<dbReference type="InterPro" id="IPR006151">
    <property type="entry name" value="Shikm_DH/Glu-tRNA_Rdtase"/>
</dbReference>
<dbReference type="NCBIfam" id="TIGR00507">
    <property type="entry name" value="aroE"/>
    <property type="match status" value="1"/>
</dbReference>
<dbReference type="NCBIfam" id="NF001312">
    <property type="entry name" value="PRK00258.1-4"/>
    <property type="match status" value="1"/>
</dbReference>
<dbReference type="PANTHER" id="PTHR21089:SF1">
    <property type="entry name" value="BIFUNCTIONAL 3-DEHYDROQUINATE DEHYDRATASE_SHIKIMATE DEHYDROGENASE, CHLOROPLASTIC"/>
    <property type="match status" value="1"/>
</dbReference>
<dbReference type="PANTHER" id="PTHR21089">
    <property type="entry name" value="SHIKIMATE DEHYDROGENASE"/>
    <property type="match status" value="1"/>
</dbReference>
<dbReference type="Pfam" id="PF18317">
    <property type="entry name" value="SDH_C"/>
    <property type="match status" value="1"/>
</dbReference>
<dbReference type="Pfam" id="PF01488">
    <property type="entry name" value="Shikimate_DH"/>
    <property type="match status" value="1"/>
</dbReference>
<dbReference type="Pfam" id="PF08501">
    <property type="entry name" value="Shikimate_dh_N"/>
    <property type="match status" value="1"/>
</dbReference>
<dbReference type="SUPFAM" id="SSF53223">
    <property type="entry name" value="Aminoacid dehydrogenase-like, N-terminal domain"/>
    <property type="match status" value="1"/>
</dbReference>
<dbReference type="SUPFAM" id="SSF51735">
    <property type="entry name" value="NAD(P)-binding Rossmann-fold domains"/>
    <property type="match status" value="1"/>
</dbReference>
<name>AROE_RHOPB</name>
<feature type="chain" id="PRO_0000325156" description="Shikimate dehydrogenase (NADP(+))">
    <location>
        <begin position="1"/>
        <end position="277"/>
    </location>
</feature>
<feature type="active site" description="Proton acceptor" evidence="1">
    <location>
        <position position="68"/>
    </location>
</feature>
<feature type="binding site" evidence="1">
    <location>
        <begin position="17"/>
        <end position="19"/>
    </location>
    <ligand>
        <name>shikimate</name>
        <dbReference type="ChEBI" id="CHEBI:36208"/>
    </ligand>
</feature>
<feature type="binding site" evidence="1">
    <location>
        <position position="64"/>
    </location>
    <ligand>
        <name>shikimate</name>
        <dbReference type="ChEBI" id="CHEBI:36208"/>
    </ligand>
</feature>
<feature type="binding site" evidence="1">
    <location>
        <position position="88"/>
    </location>
    <ligand>
        <name>shikimate</name>
        <dbReference type="ChEBI" id="CHEBI:36208"/>
    </ligand>
</feature>
<feature type="binding site" evidence="1">
    <location>
        <position position="103"/>
    </location>
    <ligand>
        <name>shikimate</name>
        <dbReference type="ChEBI" id="CHEBI:36208"/>
    </ligand>
</feature>
<feature type="binding site" evidence="1">
    <location>
        <begin position="128"/>
        <end position="132"/>
    </location>
    <ligand>
        <name>NADP(+)</name>
        <dbReference type="ChEBI" id="CHEBI:58349"/>
    </ligand>
</feature>
<feature type="binding site" evidence="1">
    <location>
        <begin position="152"/>
        <end position="157"/>
    </location>
    <ligand>
        <name>NADP(+)</name>
        <dbReference type="ChEBI" id="CHEBI:58349"/>
    </ligand>
</feature>
<feature type="binding site" evidence="1">
    <location>
        <position position="217"/>
    </location>
    <ligand>
        <name>NADP(+)</name>
        <dbReference type="ChEBI" id="CHEBI:58349"/>
    </ligand>
</feature>
<feature type="binding site" evidence="1">
    <location>
        <position position="219"/>
    </location>
    <ligand>
        <name>shikimate</name>
        <dbReference type="ChEBI" id="CHEBI:36208"/>
    </ligand>
</feature>
<feature type="binding site" evidence="1">
    <location>
        <position position="240"/>
    </location>
    <ligand>
        <name>NADP(+)</name>
        <dbReference type="ChEBI" id="CHEBI:58349"/>
    </ligand>
</feature>
<accession>Q20YZ3</accession>
<keyword id="KW-0028">Amino-acid biosynthesis</keyword>
<keyword id="KW-0057">Aromatic amino acid biosynthesis</keyword>
<keyword id="KW-0521">NADP</keyword>
<keyword id="KW-0560">Oxidoreductase</keyword>